<organism>
    <name type="scientific">Arabidopsis thaliana</name>
    <name type="common">Mouse-ear cress</name>
    <dbReference type="NCBI Taxonomy" id="3702"/>
    <lineage>
        <taxon>Eukaryota</taxon>
        <taxon>Viridiplantae</taxon>
        <taxon>Streptophyta</taxon>
        <taxon>Embryophyta</taxon>
        <taxon>Tracheophyta</taxon>
        <taxon>Spermatophyta</taxon>
        <taxon>Magnoliopsida</taxon>
        <taxon>eudicotyledons</taxon>
        <taxon>Gunneridae</taxon>
        <taxon>Pentapetalae</taxon>
        <taxon>rosids</taxon>
        <taxon>malvids</taxon>
        <taxon>Brassicales</taxon>
        <taxon>Brassicaceae</taxon>
        <taxon>Camelineae</taxon>
        <taxon>Arabidopsis</taxon>
    </lineage>
</organism>
<reference key="1">
    <citation type="journal article" date="1998" name="DNA Res.">
        <title>Structural analysis of Arabidopsis thaliana chromosome 5. VI. Sequence features of the regions of 1,367,185 bp covered by 19 physically assigned P1 and TAC clones.</title>
        <authorList>
            <person name="Kotani H."/>
            <person name="Nakamura Y."/>
            <person name="Sato S."/>
            <person name="Asamizu E."/>
            <person name="Kaneko T."/>
            <person name="Miyajima N."/>
            <person name="Tabata S."/>
        </authorList>
    </citation>
    <scope>NUCLEOTIDE SEQUENCE [LARGE SCALE GENOMIC DNA]</scope>
    <source>
        <strain>cv. Columbia</strain>
    </source>
</reference>
<reference key="2">
    <citation type="journal article" date="2017" name="Plant J.">
        <title>Araport11: a complete reannotation of the Arabidopsis thaliana reference genome.</title>
        <authorList>
            <person name="Cheng C.Y."/>
            <person name="Krishnakumar V."/>
            <person name="Chan A.P."/>
            <person name="Thibaud-Nissen F."/>
            <person name="Schobel S."/>
            <person name="Town C.D."/>
        </authorList>
    </citation>
    <scope>GENOME REANNOTATION</scope>
    <source>
        <strain>cv. Columbia</strain>
    </source>
</reference>
<reference key="3">
    <citation type="submission" date="2004-10" db="EMBL/GenBank/DDBJ databases">
        <title>Arabidopsis ORF clones.</title>
        <authorList>
            <person name="Shinn P."/>
            <person name="Chen H."/>
            <person name="Cheuk R.-F."/>
            <person name="Kim C.J."/>
            <person name="Ecker J.R."/>
        </authorList>
    </citation>
    <scope>NUCLEOTIDE SEQUENCE [LARGE SCALE MRNA]</scope>
    <source>
        <strain>cv. Columbia</strain>
    </source>
</reference>
<reference key="4">
    <citation type="journal article" date="2000" name="Plant Cell">
        <title>Genetic interactions during root hair morphogenesis in Arabidopsis.</title>
        <authorList>
            <person name="Parker J.S."/>
            <person name="Cavell A.C."/>
            <person name="Dolan L."/>
            <person name="Roberts K."/>
            <person name="Grierson C.S."/>
        </authorList>
    </citation>
    <scope>DISRUPTION PHENOTYPE</scope>
    <scope>FUNCTION</scope>
</reference>
<reference key="5">
    <citation type="journal article" date="2001" name="Plant Physiol.">
        <title>Molecular characterization of At5PTase1, an inositol phosphatase capable of terminating inositol trisphosphate signaling.</title>
        <authorList>
            <person name="Berdy S.E."/>
            <person name="Kudla J."/>
            <person name="Gruissem W."/>
            <person name="Gillaspy G.E."/>
        </authorList>
    </citation>
    <scope>GENE FAMILY</scope>
</reference>
<reference key="6">
    <citation type="journal article" date="2005" name="Plant Cell Physiol.">
        <title>The Arabidopsis root hair mutants der2-der9 are affected at different stages of root hair development.</title>
        <authorList>
            <person name="Ringli C."/>
            <person name="Baumberger N."/>
            <person name="Keller B."/>
        </authorList>
    </citation>
    <scope>DISRUPTION PHENOTYPE</scope>
</reference>
<reference key="7">
    <citation type="journal article" date="2006" name="Plant J.">
        <title>Analysis of the root-hair morphogenesis transcriptome reveals the molecular identity of six genes with roles in root-hair development in Arabidopsis.</title>
        <authorList>
            <person name="Jones M.A."/>
            <person name="Raymond M.J."/>
            <person name="Smirnoff N."/>
        </authorList>
    </citation>
    <scope>DISRUPTION PHENOTYPE</scope>
    <scope>FUNCTION</scope>
</reference>
<gene>
    <name evidence="8" type="primary">IP5P5</name>
    <name evidence="5" type="synonym">BST1</name>
    <name evidence="6" type="synonym">DER4</name>
    <name evidence="7" type="synonym">MRH3</name>
    <name evidence="9" type="ordered locus">At5g65090</name>
    <name evidence="10" type="ORF">MQN23.2</name>
</gene>
<feature type="chain" id="PRO_0000433256" description="Type I inositol polyphosphate 5-phosphatase 5">
    <location>
        <begin position="1"/>
        <end position="529"/>
    </location>
</feature>
<feature type="region of interest" description="Catalytic 1" evidence="1">
    <location>
        <begin position="371"/>
        <end position="386"/>
    </location>
</feature>
<feature type="region of interest" description="Catalytic 2" evidence="1">
    <location>
        <begin position="451"/>
        <end position="466"/>
    </location>
</feature>
<dbReference type="EC" id="3.1.3.-" evidence="8"/>
<dbReference type="EMBL" id="AB013395">
    <property type="protein sequence ID" value="BAB11645.1"/>
    <property type="status" value="ALT_SEQ"/>
    <property type="molecule type" value="Genomic_DNA"/>
</dbReference>
<dbReference type="EMBL" id="CP002688">
    <property type="protein sequence ID" value="AED98000.1"/>
    <property type="molecule type" value="Genomic_DNA"/>
</dbReference>
<dbReference type="EMBL" id="CP002688">
    <property type="protein sequence ID" value="ANM70346.1"/>
    <property type="molecule type" value="Genomic_DNA"/>
</dbReference>
<dbReference type="EMBL" id="BT015346">
    <property type="protein sequence ID" value="AAU05469.1"/>
    <property type="molecule type" value="mRNA"/>
</dbReference>
<dbReference type="EMBL" id="BT015797">
    <property type="protein sequence ID" value="AAU93569.1"/>
    <property type="molecule type" value="mRNA"/>
</dbReference>
<dbReference type="RefSeq" id="NP_001318880.1">
    <molecule id="Q66GQ6-1"/>
    <property type="nucleotide sequence ID" value="NM_001345669.1"/>
</dbReference>
<dbReference type="RefSeq" id="NP_201314.3">
    <molecule id="Q66GQ6-1"/>
    <property type="nucleotide sequence ID" value="NM_125908.5"/>
</dbReference>
<dbReference type="SMR" id="Q66GQ6"/>
<dbReference type="FunCoup" id="Q66GQ6">
    <property type="interactions" value="2655"/>
</dbReference>
<dbReference type="STRING" id="3702.Q66GQ6"/>
<dbReference type="iPTMnet" id="Q66GQ6"/>
<dbReference type="PaxDb" id="3702-AT5G65090.1"/>
<dbReference type="ProteomicsDB" id="228845">
    <molecule id="Q66GQ6-1"/>
</dbReference>
<dbReference type="EnsemblPlants" id="AT5G65090.1">
    <molecule id="Q66GQ6-1"/>
    <property type="protein sequence ID" value="AT5G65090.1"/>
    <property type="gene ID" value="AT5G65090"/>
</dbReference>
<dbReference type="EnsemblPlants" id="AT5G65090.3">
    <molecule id="Q66GQ6-1"/>
    <property type="protein sequence ID" value="AT5G65090.3"/>
    <property type="gene ID" value="AT5G65090"/>
</dbReference>
<dbReference type="GeneID" id="836633"/>
<dbReference type="Gramene" id="AT5G65090.1">
    <molecule id="Q66GQ6-1"/>
    <property type="protein sequence ID" value="AT5G65090.1"/>
    <property type="gene ID" value="AT5G65090"/>
</dbReference>
<dbReference type="Gramene" id="AT5G65090.3">
    <molecule id="Q66GQ6-1"/>
    <property type="protein sequence ID" value="AT5G65090.3"/>
    <property type="gene ID" value="AT5G65090"/>
</dbReference>
<dbReference type="KEGG" id="ath:AT5G65090"/>
<dbReference type="Araport" id="AT5G65090"/>
<dbReference type="TAIR" id="AT5G65090">
    <property type="gene designation" value="BST1"/>
</dbReference>
<dbReference type="eggNOG" id="KOG0565">
    <property type="taxonomic scope" value="Eukaryota"/>
</dbReference>
<dbReference type="InParanoid" id="Q66GQ6"/>
<dbReference type="PhylomeDB" id="Q66GQ6"/>
<dbReference type="BioCyc" id="ARA:AT5G65090-MONOMER"/>
<dbReference type="PRO" id="PR:Q66GQ6"/>
<dbReference type="Proteomes" id="UP000006548">
    <property type="component" value="Chromosome 5"/>
</dbReference>
<dbReference type="ExpressionAtlas" id="Q66GQ6">
    <property type="expression patterns" value="baseline and differential"/>
</dbReference>
<dbReference type="GO" id="GO:0004445">
    <property type="term" value="F:inositol-polyphosphate 5-phosphatase activity"/>
    <property type="evidence" value="ECO:0007669"/>
    <property type="project" value="InterPro"/>
</dbReference>
<dbReference type="GO" id="GO:0009932">
    <property type="term" value="P:cell tip growth"/>
    <property type="evidence" value="ECO:0000315"/>
    <property type="project" value="TAIR"/>
</dbReference>
<dbReference type="GO" id="GO:0046856">
    <property type="term" value="P:phosphatidylinositol dephosphorylation"/>
    <property type="evidence" value="ECO:0007669"/>
    <property type="project" value="InterPro"/>
</dbReference>
<dbReference type="GO" id="GO:0010053">
    <property type="term" value="P:root epidermal cell differentiation"/>
    <property type="evidence" value="ECO:0000315"/>
    <property type="project" value="TAIR"/>
</dbReference>
<dbReference type="GO" id="GO:0048765">
    <property type="term" value="P:root hair cell differentiation"/>
    <property type="evidence" value="ECO:0000315"/>
    <property type="project" value="UniProtKB"/>
</dbReference>
<dbReference type="GO" id="GO:0048766">
    <property type="term" value="P:root hair initiation"/>
    <property type="evidence" value="ECO:0000315"/>
    <property type="project" value="UniProtKB"/>
</dbReference>
<dbReference type="FunFam" id="3.60.10.10:FF:000017">
    <property type="entry name" value="Type I inositol polyphosphate 5-phosphatase 5"/>
    <property type="match status" value="1"/>
</dbReference>
<dbReference type="FunFam" id="3.60.10.10:FF:000092">
    <property type="entry name" value="Type I inositol polyphosphate 5-phosphatase 5"/>
    <property type="match status" value="1"/>
</dbReference>
<dbReference type="Gene3D" id="3.60.10.10">
    <property type="entry name" value="Endonuclease/exonuclease/phosphatase"/>
    <property type="match status" value="2"/>
</dbReference>
<dbReference type="InterPro" id="IPR036691">
    <property type="entry name" value="Endo/exonu/phosph_ase_sf"/>
</dbReference>
<dbReference type="InterPro" id="IPR045849">
    <property type="entry name" value="IP5P_plant"/>
</dbReference>
<dbReference type="InterPro" id="IPR000300">
    <property type="entry name" value="IPPc"/>
</dbReference>
<dbReference type="PANTHER" id="PTHR45666:SF3">
    <property type="entry name" value="TYPE I INOSITOL POLYPHOSPHATE 5-PHOSPHATASE 5"/>
    <property type="match status" value="1"/>
</dbReference>
<dbReference type="PANTHER" id="PTHR45666">
    <property type="entry name" value="TYPE IV INOSITOL POLYPHOSPHATE 5-PHOSPHATASE 9"/>
    <property type="match status" value="1"/>
</dbReference>
<dbReference type="Pfam" id="PF22669">
    <property type="entry name" value="Exo_endo_phos2"/>
    <property type="match status" value="1"/>
</dbReference>
<dbReference type="SMART" id="SM00128">
    <property type="entry name" value="IPPc"/>
    <property type="match status" value="1"/>
</dbReference>
<dbReference type="SUPFAM" id="SSF56219">
    <property type="entry name" value="DNase I-like"/>
    <property type="match status" value="1"/>
</dbReference>
<accession>Q66GQ6</accession>
<accession>Q9FJQ6</accession>
<sequence length="529" mass="59930">MNNRGNNDDLDHHYGVFNDFERRMTSRKKSVLDNTSPMIWKTVSERKSSPGIEGLNLSSFDRPMAPTTEIRELRVFLATWNVGGRTPNNDLNLEDFLLVEGTADLYICGFQEIVPLSAGNVLVVEDNEPAAKWLALISQALNKPKQESVYSNAAYSASRTTTCSSSSCGSEESRAPSSLSFFQRPNLKVLSRNYRVDSSLLKTCNCPVIDTSVGWEARRSKRFSDPSTDSSNNVEPENFRVHENFLFDDVPATTKMPGQMSYRLIASKQMVGLFLSVWARRELIPHISHLRLDSVGRGIMGRLGNKGCIAISMSLHQTSFCFVCSHLASGEKEGDELRRNADVAEILKHTQFPKLTKNPNCHAPERIIDHDRVLWLGDLNYRVALTYEETRVLLEDNDWDTLLERDQLNMERGAGRVFSGFQEGQIFFAPTYKYSQNSDAYAGEMTKSKKKRRTPAWCDRILWKGEGIEQLSYIRGESRFSDHRPVCAIFAVEVDVKSLNKGRFRKGYSCAAVRLVEDVAIPQRHSFYD</sequence>
<name>IP5P5_ARATH</name>
<evidence type="ECO:0000250" key="1">
    <source>
        <dbReference type="UniProtKB" id="Q84MA2"/>
    </source>
</evidence>
<evidence type="ECO:0000269" key="2">
    <source>
    </source>
</evidence>
<evidence type="ECO:0000269" key="3">
    <source>
    </source>
</evidence>
<evidence type="ECO:0000269" key="4">
    <source>
    </source>
</evidence>
<evidence type="ECO:0000303" key="5">
    <source>
    </source>
</evidence>
<evidence type="ECO:0000303" key="6">
    <source>
    </source>
</evidence>
<evidence type="ECO:0000303" key="7">
    <source>
    </source>
</evidence>
<evidence type="ECO:0000305" key="8"/>
<evidence type="ECO:0000312" key="9">
    <source>
        <dbReference type="Araport" id="AT5G65090"/>
    </source>
</evidence>
<evidence type="ECO:0000312" key="10">
    <source>
        <dbReference type="EMBL" id="BAB11645.1"/>
    </source>
</evidence>
<comment type="function">
    <text evidence="2 4">May be involved in the regulation of root hairs development. Required for restricting both the size of the root-hair initiation site and the width of the root hairs during the transition to tip growth, but is not required for normal subsequent tip growth.</text>
</comment>
<comment type="alternative products">
    <event type="alternative splicing"/>
    <isoform>
        <id>Q66GQ6-1</id>
        <name>1</name>
        <sequence type="displayed"/>
    </isoform>
    <text>A number of isoforms are produced. According to EST sequences.</text>
</comment>
<comment type="disruption phenotype">
    <text evidence="2 3 4">Affected root hair morphogenesis.</text>
</comment>
<comment type="similarity">
    <text evidence="8">Belongs to the inositol polyphosphate 5-phosphatase family.</text>
</comment>
<comment type="sequence caution" evidence="8">
    <conflict type="erroneous gene model prediction">
        <sequence resource="EMBL-CDS" id="BAB11645"/>
    </conflict>
</comment>
<keyword id="KW-0025">Alternative splicing</keyword>
<keyword id="KW-0378">Hydrolase</keyword>
<keyword id="KW-1185">Reference proteome</keyword>
<protein>
    <recommendedName>
        <fullName evidence="8">Type I inositol polyphosphate 5-phosphatase 5</fullName>
        <shortName evidence="8">At5PTase5</shortName>
        <ecNumber evidence="8">3.1.3.-</ecNumber>
    </recommendedName>
    <alternativeName>
        <fullName evidence="5">Protein BRISTLED 1</fullName>
    </alternativeName>
    <alternativeName>
        <fullName evidence="6">Protein DEFORMED ROOT HAIRS 4</fullName>
    </alternativeName>
</protein>
<proteinExistence type="evidence at transcript level"/>